<reference key="1">
    <citation type="journal article" date="2003" name="Science">
        <title>Role of mobile DNA in the evolution of vancomycin-resistant Enterococcus faecalis.</title>
        <authorList>
            <person name="Paulsen I.T."/>
            <person name="Banerjei L."/>
            <person name="Myers G.S.A."/>
            <person name="Nelson K.E."/>
            <person name="Seshadri R."/>
            <person name="Read T.D."/>
            <person name="Fouts D.E."/>
            <person name="Eisen J.A."/>
            <person name="Gill S.R."/>
            <person name="Heidelberg J.F."/>
            <person name="Tettelin H."/>
            <person name="Dodson R.J."/>
            <person name="Umayam L.A."/>
            <person name="Brinkac L.M."/>
            <person name="Beanan M.J."/>
            <person name="Daugherty S.C."/>
            <person name="DeBoy R.T."/>
            <person name="Durkin S.A."/>
            <person name="Kolonay J.F."/>
            <person name="Madupu R."/>
            <person name="Nelson W.C."/>
            <person name="Vamathevan J.J."/>
            <person name="Tran B."/>
            <person name="Upton J."/>
            <person name="Hansen T."/>
            <person name="Shetty J."/>
            <person name="Khouri H.M."/>
            <person name="Utterback T.R."/>
            <person name="Radune D."/>
            <person name="Ketchum K.A."/>
            <person name="Dougherty B.A."/>
            <person name="Fraser C.M."/>
        </authorList>
    </citation>
    <scope>NUCLEOTIDE SEQUENCE [LARGE SCALE GENOMIC DNA]</scope>
    <source>
        <strain>ATCC 700802 / V583</strain>
    </source>
</reference>
<dbReference type="EC" id="5.1.1.7" evidence="1"/>
<dbReference type="EMBL" id="AE016830">
    <property type="protein sequence ID" value="AAO80319.1"/>
    <property type="molecule type" value="Genomic_DNA"/>
</dbReference>
<dbReference type="RefSeq" id="NP_814248.1">
    <property type="nucleotide sequence ID" value="NC_004668.1"/>
</dbReference>
<dbReference type="RefSeq" id="WP_002387689.1">
    <property type="nucleotide sequence ID" value="NZ_KE136524.1"/>
</dbReference>
<dbReference type="SMR" id="Q838I3"/>
<dbReference type="STRING" id="226185.EF_0464"/>
<dbReference type="EnsemblBacteria" id="AAO80319">
    <property type="protein sequence ID" value="AAO80319"/>
    <property type="gene ID" value="EF_0464"/>
</dbReference>
<dbReference type="KEGG" id="efa:EF0464"/>
<dbReference type="PATRIC" id="fig|226185.45.peg.2871"/>
<dbReference type="eggNOG" id="COG0253">
    <property type="taxonomic scope" value="Bacteria"/>
</dbReference>
<dbReference type="HOGENOM" id="CLU_053306_3_1_9"/>
<dbReference type="UniPathway" id="UPA00034">
    <property type="reaction ID" value="UER00025"/>
</dbReference>
<dbReference type="Proteomes" id="UP000001415">
    <property type="component" value="Chromosome"/>
</dbReference>
<dbReference type="GO" id="GO:0005829">
    <property type="term" value="C:cytosol"/>
    <property type="evidence" value="ECO:0007669"/>
    <property type="project" value="TreeGrafter"/>
</dbReference>
<dbReference type="GO" id="GO:0008837">
    <property type="term" value="F:diaminopimelate epimerase activity"/>
    <property type="evidence" value="ECO:0007669"/>
    <property type="project" value="UniProtKB-UniRule"/>
</dbReference>
<dbReference type="GO" id="GO:0009089">
    <property type="term" value="P:lysine biosynthetic process via diaminopimelate"/>
    <property type="evidence" value="ECO:0007669"/>
    <property type="project" value="UniProtKB-UniRule"/>
</dbReference>
<dbReference type="Gene3D" id="3.10.310.10">
    <property type="entry name" value="Diaminopimelate Epimerase, Chain A, domain 1"/>
    <property type="match status" value="2"/>
</dbReference>
<dbReference type="HAMAP" id="MF_00197">
    <property type="entry name" value="DAP_epimerase"/>
    <property type="match status" value="1"/>
</dbReference>
<dbReference type="InterPro" id="IPR018510">
    <property type="entry name" value="DAP_epimerase_AS"/>
</dbReference>
<dbReference type="InterPro" id="IPR001653">
    <property type="entry name" value="DAP_epimerase_DapF"/>
</dbReference>
<dbReference type="NCBIfam" id="TIGR00652">
    <property type="entry name" value="DapF"/>
    <property type="match status" value="1"/>
</dbReference>
<dbReference type="PANTHER" id="PTHR31689:SF0">
    <property type="entry name" value="DIAMINOPIMELATE EPIMERASE"/>
    <property type="match status" value="1"/>
</dbReference>
<dbReference type="PANTHER" id="PTHR31689">
    <property type="entry name" value="DIAMINOPIMELATE EPIMERASE, CHLOROPLASTIC"/>
    <property type="match status" value="1"/>
</dbReference>
<dbReference type="Pfam" id="PF01678">
    <property type="entry name" value="DAP_epimerase"/>
    <property type="match status" value="2"/>
</dbReference>
<dbReference type="SUPFAM" id="SSF54506">
    <property type="entry name" value="Diaminopimelate epimerase-like"/>
    <property type="match status" value="2"/>
</dbReference>
<dbReference type="PROSITE" id="PS01326">
    <property type="entry name" value="DAP_EPIMERASE"/>
    <property type="match status" value="1"/>
</dbReference>
<comment type="function">
    <text evidence="1">Catalyzes the stereoinversion of LL-2,6-diaminopimelate (L,L-DAP) to meso-diaminopimelate (meso-DAP), a precursor of L-lysine and an essential component of the bacterial peptidoglycan.</text>
</comment>
<comment type="catalytic activity">
    <reaction evidence="1">
        <text>(2S,6S)-2,6-diaminopimelate = meso-2,6-diaminopimelate</text>
        <dbReference type="Rhea" id="RHEA:15393"/>
        <dbReference type="ChEBI" id="CHEBI:57609"/>
        <dbReference type="ChEBI" id="CHEBI:57791"/>
        <dbReference type="EC" id="5.1.1.7"/>
    </reaction>
</comment>
<comment type="pathway">
    <text evidence="1">Amino-acid biosynthesis; L-lysine biosynthesis via DAP pathway; DL-2,6-diaminopimelate from LL-2,6-diaminopimelate: step 1/1.</text>
</comment>
<comment type="subunit">
    <text evidence="1">Homodimer.</text>
</comment>
<comment type="subcellular location">
    <subcellularLocation>
        <location evidence="1">Cytoplasm</location>
    </subcellularLocation>
</comment>
<comment type="similarity">
    <text evidence="1">Belongs to the diaminopimelate epimerase family.</text>
</comment>
<protein>
    <recommendedName>
        <fullName evidence="1">Diaminopimelate epimerase</fullName>
        <shortName evidence="1">DAP epimerase</shortName>
        <ecNumber evidence="1">5.1.1.7</ecNumber>
    </recommendedName>
    <alternativeName>
        <fullName evidence="1">PLP-independent amino acid racemase</fullName>
    </alternativeName>
</protein>
<evidence type="ECO:0000255" key="1">
    <source>
        <dbReference type="HAMAP-Rule" id="MF_00197"/>
    </source>
</evidence>
<feature type="chain" id="PRO_1000011876" description="Diaminopimelate epimerase">
    <location>
        <begin position="1"/>
        <end position="326"/>
    </location>
</feature>
<feature type="active site" description="Proton donor" evidence="1">
    <location>
        <position position="81"/>
    </location>
</feature>
<feature type="active site" description="Proton acceptor" evidence="1">
    <location>
        <position position="232"/>
    </location>
</feature>
<feature type="binding site" evidence="1">
    <location>
        <position position="13"/>
    </location>
    <ligand>
        <name>substrate</name>
    </ligand>
</feature>
<feature type="binding site" evidence="1">
    <location>
        <position position="72"/>
    </location>
    <ligand>
        <name>substrate</name>
    </ligand>
</feature>
<feature type="binding site" evidence="1">
    <location>
        <begin position="82"/>
        <end position="83"/>
    </location>
    <ligand>
        <name>substrate</name>
    </ligand>
</feature>
<feature type="binding site" evidence="1">
    <location>
        <position position="169"/>
    </location>
    <ligand>
        <name>substrate</name>
    </ligand>
</feature>
<feature type="binding site" evidence="1">
    <location>
        <position position="205"/>
    </location>
    <ligand>
        <name>substrate</name>
    </ligand>
</feature>
<feature type="binding site" evidence="1">
    <location>
        <begin position="223"/>
        <end position="224"/>
    </location>
    <ligand>
        <name>substrate</name>
    </ligand>
</feature>
<feature type="binding site" evidence="1">
    <location>
        <begin position="233"/>
        <end position="234"/>
    </location>
    <ligand>
        <name>substrate</name>
    </ligand>
</feature>
<feature type="site" description="Could be important to modulate the pK values of the two catalytic cysteine residues" evidence="1">
    <location>
        <position position="171"/>
    </location>
</feature>
<feature type="site" description="Could be important to modulate the pK values of the two catalytic cysteine residues" evidence="1">
    <location>
        <position position="223"/>
    </location>
</feature>
<sequence length="326" mass="36095">MNVMMQKVHGSENDFFLLDETQFERSLTAEEIEQLRIQLCSRETGLLAGADGLLLVGEGTHGTSNARMRVINSDGSEASMCGNGLRTVARYLAEKNQEKSFTVETMFADLKVRQAPNLAEEVATYQVEISPVSFEAVTIPMHLGVQTLIDEIVPALSNTIRFTAVAVPNPHLVAFVDHETLNGPEFERIATYVNNENPYFPEGINVSFVEILGKNQLFVRTYERGVGFTSACGTAMCASSLLYTLLKDGVFYEEITVKNTGGMVKTVVHETSDGSYWMELIGNATITHLIEGSLTDLLNGAFEKITITETNEQKHYQEFLQTLSQK</sequence>
<accession>Q838I3</accession>
<gene>
    <name evidence="1" type="primary">dapF</name>
    <name type="ordered locus">EF_0464</name>
</gene>
<keyword id="KW-0028">Amino-acid biosynthesis</keyword>
<keyword id="KW-0963">Cytoplasm</keyword>
<keyword id="KW-0413">Isomerase</keyword>
<keyword id="KW-0457">Lysine biosynthesis</keyword>
<keyword id="KW-1185">Reference proteome</keyword>
<proteinExistence type="inferred from homology"/>
<name>DAPF_ENTFA</name>
<organism>
    <name type="scientific">Enterococcus faecalis (strain ATCC 700802 / V583)</name>
    <dbReference type="NCBI Taxonomy" id="226185"/>
    <lineage>
        <taxon>Bacteria</taxon>
        <taxon>Bacillati</taxon>
        <taxon>Bacillota</taxon>
        <taxon>Bacilli</taxon>
        <taxon>Lactobacillales</taxon>
        <taxon>Enterococcaceae</taxon>
        <taxon>Enterococcus</taxon>
    </lineage>
</organism>